<accession>P13128</accession>
<accession>Q48747</accession>
<accession>Q57096</accession>
<accession>Q57206</accession>
<feature type="signal peptide" evidence="3">
    <location>
        <begin position="1"/>
        <end position="24"/>
    </location>
</feature>
<feature type="chain" id="PRO_0000034102" description="Listeriolysin O">
    <location>
        <begin position="25"/>
        <end position="529"/>
    </location>
</feature>
<feature type="transmembrane region" description="Beta stranded" evidence="2">
    <location>
        <begin position="214"/>
        <end position="227"/>
    </location>
</feature>
<feature type="transmembrane region" description="Beta stranded" evidence="2">
    <location>
        <begin position="234"/>
        <end position="243"/>
    </location>
</feature>
<feature type="transmembrane region" description="Beta stranded" evidence="2">
    <location>
        <begin position="312"/>
        <end position="321"/>
    </location>
</feature>
<feature type="transmembrane region" description="Beta stranded" evidence="2">
    <location>
        <begin position="329"/>
        <end position="341"/>
    </location>
</feature>
<feature type="region of interest" description="Disordered" evidence="4">
    <location>
        <begin position="35"/>
        <end position="54"/>
    </location>
</feature>
<feature type="short sequence motif" description="Conserved undecapeptide" evidence="22">
    <location>
        <begin position="483"/>
        <end position="493"/>
    </location>
</feature>
<feature type="short sequence motif" description="Cholesterol binding" evidence="1">
    <location>
        <begin position="515"/>
        <end position="516"/>
    </location>
</feature>
<feature type="modified residue" description="Phosphoserine" evidence="23">
    <location>
        <position position="44"/>
    </location>
</feature>
<feature type="sequence variant" description="In strain: F4233 / Serotype 1/2b, F5782 /Serotype 4b, F6789 / Serotype 1/2b and 12067.">
    <original>S</original>
    <variation>L</variation>
    <location>
        <position position="35"/>
    </location>
</feature>
<feature type="sequence variant" description="In strain: F4233 / Serotype 1/2b, F5782 /Serotype 4b, F6789 / Serotype 1/2b and 12067.">
    <original>V</original>
    <variation>I</variation>
    <location>
        <position position="438"/>
    </location>
</feature>
<feature type="sequence variant" description="In strain: F4233 / Serotype 1/2b, F5782 /Serotype 4b, F6789 / Serotype 1/2b and 12067.">
    <original>K</original>
    <variation>S</variation>
    <location>
        <position position="523"/>
    </location>
</feature>
<feature type="mutagenesis site" description="2.5-fold increase in hemolytic activity." evidence="15">
    <location>
        <begin position="38"/>
        <end position="52"/>
    </location>
</feature>
<feature type="mutagenesis site" description="2.5-fold increase in hemolytic activity." evidence="15">
    <original>A</original>
    <variation>W</variation>
    <location>
        <position position="40"/>
    </location>
</feature>
<feature type="mutagenesis site" description="1500-fold decrease in virulence." evidence="9">
    <original>S</original>
    <variation>A</variation>
    <location>
        <position position="44"/>
    </location>
</feature>
<feature type="mutagenesis site" description="2-fold increase in hemolytic activity." evidence="15">
    <original>S</original>
    <variation>D</variation>
    <variation>E</variation>
    <location>
        <position position="44"/>
    </location>
</feature>
<feature type="mutagenesis site" description="Does not affect secretion and hemolytic activity. No defect in phagosomal escape. Shows a clear attenuation in virulence." evidence="8">
    <original>P</original>
    <variation>A</variation>
    <location>
        <position position="49"/>
    </location>
</feature>
<feature type="mutagenesis site" description="Does not affect secretion and hemolytic activity. Slight decrease in phagosomal escape. Shows a clear attenuation in virulence." evidence="8">
    <original>K</original>
    <variation>A</variation>
    <location>
        <position position="50"/>
    </location>
</feature>
<feature type="mutagenesis site" description="Does not affect secretion and hemolytic activity. Slight decrease in phagosomal escape. Shows a clear attenuation in virulence." evidence="8">
    <original>P</original>
    <variation>A</variation>
    <location>
        <position position="52"/>
    </location>
</feature>
<feature type="mutagenesis site" description="Loss of hemolytic activity." evidence="15">
    <original>K</original>
    <variation>E</variation>
    <location>
        <position position="175"/>
    </location>
</feature>
<feature type="mutagenesis site" description="Loss of hemolytic activity." evidence="15">
    <original>S</original>
    <variation>W</variation>
    <location>
        <position position="176"/>
    </location>
</feature>
<feature type="mutagenesis site" description="50% hemolytic activity." evidence="15">
    <original>N</original>
    <variation>W</variation>
    <location>
        <position position="230"/>
    </location>
</feature>
<feature type="mutagenesis site" description="Loss of hemolytic activity." evidence="15">
    <original>E</original>
    <variation>K</variation>
    <location>
        <position position="262"/>
    </location>
</feature>
<feature type="mutagenesis site" description="No change in hemolytic activity." evidence="15">
    <original>E</original>
    <variation>W</variation>
    <location>
        <position position="262"/>
    </location>
</feature>
<feature type="mutagenesis site" description="3-fold increase in hemolytic activity." evidence="15">
    <original>D</original>
    <variation>W</variation>
    <location>
        <position position="394"/>
    </location>
</feature>
<feature type="mutagenesis site" description="10-fold increase in hemolytic activity at neutral pH, but 100-fold decrease in virulence." evidence="7">
    <original>L</original>
    <variation>T</variation>
    <location>
        <position position="461"/>
    </location>
</feature>
<feature type="mutagenesis site" description="25% decrease in hemolytic activity, but still able to stimulate MAP kinase tyrosine phosphorylation in host cells. Does not affect membrane-binding capacity." evidence="12 17">
    <original>C</original>
    <variation>A</variation>
    <location>
        <position position="484"/>
    </location>
</feature>
<feature type="mutagenesis site" description="80% decrease in hemolytic activity, but still able to stimulate MAP kinase tyrosine phosphorylation in host cells. Does not affect membrane-binding capacity." evidence="12 17">
    <original>C</original>
    <variation>S</variation>
    <location>
        <position position="484"/>
    </location>
</feature>
<feature type="mutagenesis site" description="Decreases toxicity by about 40%, decreases cholesterol binding by 25%." evidence="6">
    <original>A</original>
    <variation>F</variation>
    <location>
        <position position="488"/>
    </location>
</feature>
<feature type="mutagenesis site" description="95% decrease in hemolytic activity and no stimulation of MAP kinase activity. Does not affect membrane-binding capacity." evidence="12 17">
    <original>W</original>
    <variation>A</variation>
    <location>
        <position position="491"/>
    </location>
</feature>
<feature type="mutagenesis site" description="99.9% decrease in hemolytic activity and no stimulation of MAP kinase activity. Does not affect membrane-binding capacity." evidence="12 17">
    <original>W</original>
    <variation>A</variation>
    <location>
        <position position="492"/>
    </location>
</feature>
<dbReference type="EMBL" id="X15127">
    <property type="protein sequence ID" value="CAA33223.1"/>
    <property type="molecule type" value="Genomic_DNA"/>
</dbReference>
<dbReference type="EMBL" id="M24199">
    <property type="protein sequence ID" value="AAA03018.1"/>
    <property type="molecule type" value="Unassigned_DNA"/>
</dbReference>
<dbReference type="EMBL" id="X60035">
    <property type="protein sequence ID" value="CAA42639.1"/>
    <property type="molecule type" value="Genomic_DNA"/>
</dbReference>
<dbReference type="EMBL" id="U25446">
    <property type="protein sequence ID" value="AAA69528.1"/>
    <property type="status" value="ALT_INIT"/>
    <property type="molecule type" value="Genomic_DNA"/>
</dbReference>
<dbReference type="EMBL" id="U25449">
    <property type="protein sequence ID" value="AAA69531.1"/>
    <property type="status" value="ALT_INIT"/>
    <property type="molecule type" value="Genomic_DNA"/>
</dbReference>
<dbReference type="EMBL" id="U25452">
    <property type="protein sequence ID" value="AAA69534.1"/>
    <property type="molecule type" value="Genomic_DNA"/>
</dbReference>
<dbReference type="EMBL" id="AL591974">
    <property type="protein sequence ID" value="CAD00729.1"/>
    <property type="molecule type" value="Genomic_DNA"/>
</dbReference>
<dbReference type="PIR" id="A43505">
    <property type="entry name" value="A43505"/>
</dbReference>
<dbReference type="PIR" id="AC1100">
    <property type="entry name" value="AC1100"/>
</dbReference>
<dbReference type="PIR" id="S24231">
    <property type="entry name" value="S24231"/>
</dbReference>
<dbReference type="RefSeq" id="NP_463733.1">
    <property type="nucleotide sequence ID" value="NC_003210.1"/>
</dbReference>
<dbReference type="RefSeq" id="WP_003722731.1">
    <property type="nucleotide sequence ID" value="NZ_CP149495.1"/>
</dbReference>
<dbReference type="PDB" id="4CDB">
    <property type="method" value="X-ray"/>
    <property type="resolution" value="2.15 A"/>
    <property type="chains" value="A=39-526"/>
</dbReference>
<dbReference type="PDBsum" id="4CDB"/>
<dbReference type="SMR" id="P13128"/>
<dbReference type="IntAct" id="P13128">
    <property type="interactions" value="1"/>
</dbReference>
<dbReference type="MINT" id="P13128"/>
<dbReference type="STRING" id="169963.gene:17592838"/>
<dbReference type="TCDB" id="1.C.12.1.7">
    <property type="family name" value="the thiol-activated cholesterol-dependent cytolysin (cdc) family"/>
</dbReference>
<dbReference type="iPTMnet" id="P13128"/>
<dbReference type="PaxDb" id="169963-lmo0202"/>
<dbReference type="EnsemblBacteria" id="CAD00729">
    <property type="protein sequence ID" value="CAD00729"/>
    <property type="gene ID" value="CAD00729"/>
</dbReference>
<dbReference type="GeneID" id="987033"/>
<dbReference type="KEGG" id="lmo:lmo0202"/>
<dbReference type="PATRIC" id="fig|169963.11.peg.207"/>
<dbReference type="eggNOG" id="ENOG502Z7ST">
    <property type="taxonomic scope" value="Bacteria"/>
</dbReference>
<dbReference type="HOGENOM" id="CLU_026912_0_0_9"/>
<dbReference type="OrthoDB" id="1875540at2"/>
<dbReference type="BioCyc" id="LMON169963:LMO0202-MONOMER"/>
<dbReference type="PHI-base" id="PHI:6618"/>
<dbReference type="PHI-base" id="PHI:7897"/>
<dbReference type="PHI-base" id="PHI:9819"/>
<dbReference type="Proteomes" id="UP000000817">
    <property type="component" value="Chromosome"/>
</dbReference>
<dbReference type="GO" id="GO:0005576">
    <property type="term" value="C:extracellular region"/>
    <property type="evidence" value="ECO:0007669"/>
    <property type="project" value="UniProtKB-SubCell"/>
</dbReference>
<dbReference type="GO" id="GO:0020002">
    <property type="term" value="C:host cell plasma membrane"/>
    <property type="evidence" value="ECO:0007669"/>
    <property type="project" value="UniProtKB-SubCell"/>
</dbReference>
<dbReference type="GO" id="GO:0016020">
    <property type="term" value="C:membrane"/>
    <property type="evidence" value="ECO:0007669"/>
    <property type="project" value="UniProtKB-KW"/>
</dbReference>
<dbReference type="GO" id="GO:0015485">
    <property type="term" value="F:cholesterol binding"/>
    <property type="evidence" value="ECO:0007669"/>
    <property type="project" value="InterPro"/>
</dbReference>
<dbReference type="GO" id="GO:0042802">
    <property type="term" value="F:identical protein binding"/>
    <property type="evidence" value="ECO:0000353"/>
    <property type="project" value="IntAct"/>
</dbReference>
<dbReference type="GO" id="GO:0090729">
    <property type="term" value="F:toxin activity"/>
    <property type="evidence" value="ECO:0007669"/>
    <property type="project" value="UniProtKB-KW"/>
</dbReference>
<dbReference type="GO" id="GO:0031640">
    <property type="term" value="P:killing of cells of another organism"/>
    <property type="evidence" value="ECO:0007669"/>
    <property type="project" value="UniProtKB-KW"/>
</dbReference>
<dbReference type="GO" id="GO:0141160">
    <property type="term" value="P:symbiont-mediated disruption of host phagosome"/>
    <property type="evidence" value="ECO:0000269"/>
    <property type="project" value="SigSci"/>
</dbReference>
<dbReference type="GO" id="GO:0044658">
    <property type="term" value="P:symbiont-mediated pore formation in host plasma membrane"/>
    <property type="evidence" value="ECO:0000269"/>
    <property type="project" value="SigSci"/>
</dbReference>
<dbReference type="FunFam" id="2.60.40.1430:FF:000001">
    <property type="entry name" value="Thiol-activated cytolysin"/>
    <property type="match status" value="1"/>
</dbReference>
<dbReference type="Gene3D" id="3.30.1040.20">
    <property type="match status" value="1"/>
</dbReference>
<dbReference type="Gene3D" id="3.40.30.40">
    <property type="entry name" value="Perfringolysin"/>
    <property type="match status" value="1"/>
</dbReference>
<dbReference type="Gene3D" id="2.60.40.1430">
    <property type="entry name" value="Perfringolysin, domain 4"/>
    <property type="match status" value="1"/>
</dbReference>
<dbReference type="Gene3D" id="3.90.840.10">
    <property type="entry name" value="Thiol-activated cytolysin superfamily/Thiol-activated cytolysin, alpha-beta domain"/>
    <property type="match status" value="1"/>
</dbReference>
<dbReference type="InterPro" id="IPR035390">
    <property type="entry name" value="Thiol_cytolys_C"/>
</dbReference>
<dbReference type="InterPro" id="IPR038700">
    <property type="entry name" value="Thiol_cytolys_C_sf"/>
</dbReference>
<dbReference type="InterPro" id="IPR001869">
    <property type="entry name" value="Thiol_cytolysin"/>
</dbReference>
<dbReference type="InterPro" id="IPR036363">
    <property type="entry name" value="Thiol_cytolysin_ab_sf"/>
</dbReference>
<dbReference type="InterPro" id="IPR036359">
    <property type="entry name" value="Thiol_cytolysin_sf"/>
</dbReference>
<dbReference type="Pfam" id="PF17440">
    <property type="entry name" value="Thiol_cytolys_C"/>
    <property type="match status" value="1"/>
</dbReference>
<dbReference type="Pfam" id="PF01289">
    <property type="entry name" value="Thiol_cytolysin"/>
    <property type="match status" value="1"/>
</dbReference>
<dbReference type="PRINTS" id="PR01400">
    <property type="entry name" value="TACYTOLYSIN"/>
</dbReference>
<dbReference type="SUPFAM" id="SSF56978">
    <property type="entry name" value="Perfringolysin"/>
    <property type="match status" value="1"/>
</dbReference>
<dbReference type="PROSITE" id="PS00481">
    <property type="entry name" value="THIOL_CYTOLYSINS"/>
    <property type="match status" value="1"/>
</dbReference>
<sequence length="529" mass="58688">MKKIMLVFITLILVSLPIAQQTEAKDASAFNKENSISSMAPPASPPASPKTPIEKKHADEIDKYIQGLDYNKNNVLVYHGDAVTNVPPRKGYKDGNEYIVVEKKKKSINQNNADIQVVNAISSLTYPGALVKANSELVENQPDVLPVKRDSLTLSIDLPGMTNQDNKIVVKNATKSNVNNAVNTLVERWNEKYAQAYPNVSAKIDYDDEMAYSESQLIAKFGTAFKAVNNSLNVNFGAISEGKMQEEVISFKQIYYNVNVNEPTRPSRFFGKAVTKEQLQALGVNAENPPAYISSVAYGRQVYLKLSTNSHSTKVKAAFDAAVSGKSVSGDVELTNIIKNSSFKAVIYGGSAKDEVQIIDGNLGDLRDILKKGATFNRETPGVPIAYTTNFLKDNELAVIKNNSEYIETTSKAYTDGKINIDHSGGYVAQFNISWDEVNYDPEGNEIVQHKNWSENNKSKLAHFTSSIYLPGNARNINVYAKECTGLAWEWWRTVIDDRNLPLVKNRNISIWGTTLYPKYSNKVDNPIE</sequence>
<evidence type="ECO:0000250" key="1">
    <source>
        <dbReference type="UniProtKB" id="P0C2E9"/>
    </source>
</evidence>
<evidence type="ECO:0000250" key="2">
    <source>
        <dbReference type="UniProtKB" id="Q04IN8"/>
    </source>
</evidence>
<evidence type="ECO:0000255" key="3"/>
<evidence type="ECO:0000256" key="4">
    <source>
        <dbReference type="SAM" id="MobiDB-lite"/>
    </source>
</evidence>
<evidence type="ECO:0000269" key="5">
    <source>
    </source>
</evidence>
<evidence type="ECO:0000269" key="6">
    <source>
    </source>
</evidence>
<evidence type="ECO:0000269" key="7">
    <source>
    </source>
</evidence>
<evidence type="ECO:0000269" key="8">
    <source>
    </source>
</evidence>
<evidence type="ECO:0000269" key="9">
    <source>
    </source>
</evidence>
<evidence type="ECO:0000269" key="10">
    <source>
    </source>
</evidence>
<evidence type="ECO:0000269" key="11">
    <source>
    </source>
</evidence>
<evidence type="ECO:0000269" key="12">
    <source>
    </source>
</evidence>
<evidence type="ECO:0000269" key="13">
    <source>
    </source>
</evidence>
<evidence type="ECO:0000269" key="14">
    <source>
    </source>
</evidence>
<evidence type="ECO:0000269" key="15">
    <source>
    </source>
</evidence>
<evidence type="ECO:0000269" key="16">
    <source>
    </source>
</evidence>
<evidence type="ECO:0000269" key="17">
    <source>
    </source>
</evidence>
<evidence type="ECO:0000269" key="18">
    <source>
    </source>
</evidence>
<evidence type="ECO:0000269" key="19">
    <source>
    </source>
</evidence>
<evidence type="ECO:0000303" key="20">
    <source>
    </source>
</evidence>
<evidence type="ECO:0000303" key="21">
    <source>
    </source>
</evidence>
<evidence type="ECO:0000305" key="22"/>
<evidence type="ECO:0000305" key="23">
    <source>
    </source>
</evidence>
<evidence type="ECO:0000305" key="24">
    <source>
    </source>
</evidence>
<evidence type="ECO:0007744" key="25">
    <source>
        <dbReference type="PDB" id="4CDB"/>
    </source>
</evidence>
<name>TACY_LISMO</name>
<proteinExistence type="evidence at protein level"/>
<comment type="function">
    <text evidence="6 7 11 13 15 16 17 18">A cholesterol-dependent pore-forming toxin, which is a major virulence factor required for the escape of bacteria from phagosomal vacuoles and entry into the host cytosol. After binding to target membranes, the protein undergoes a major conformation change, leading to its insertion in the host membrane and formation of an oligomeric pore complex. Listeriolysin O activates mitogen-activated protein (MAP) kinase activity in host cells, most likely as a result of the permeabilization of the host cell membrane. Also induces a proteasome-independent degradation of UBE2I (the SUMO-conjugating enzyme UBC9) and a proteasome-dependent degradation of some sumoylated proteins. Finally, is necessary and sufficient for spacious Listeria-containing phagosomes (SLAPs) formation, suggesting a role for listeriolysin O in promoting L.monocytogenes replication in vacuoles, leading to persistent infection. Recognized by serum from healthy humans exposed to L.monocytogenes as well from patients who have recovered from listeriosis (PubMed:9284184).</text>
</comment>
<comment type="activity regulation">
    <text evidence="9 10 16 19">Activity of listeriolysin O is regulated on multiple levels. It should be high in the phagosome, thereby allowing escape of the bacteria from the phagosomal compartment. Then, once inside the host cytosol, the activity must be controlled to prevent lysis of the host plasma membrane and loss of the intracellular environment. Multiple regulatory mechanisms include translational repression, which is required to minimize levels of listeriolysin O in the host cytosol. In addition, cytolytic activity is pH-dependent. Activity is high in the acidic environment of the phagosome and is turned off in the neutral pH of the cytosol. Listeriolysin O is also ubiquitinated and rapidly degraded by host proteasome in cytosol. The lytic activity is activated by reducing agents and suppressed by oxidation. Also inhibited by very low amounts of cholesterol.</text>
</comment>
<comment type="biophysicochemical properties">
    <phDependence>
        <text evidence="16">Optimum pH is 5.5. Cytolytic activity is undetectable at pH 7.0.</text>
    </phDependence>
</comment>
<comment type="subunit">
    <text evidence="24">Homooligomeric pore complex of 35-50 subunits; when inserted in the host membrane.</text>
</comment>
<comment type="interaction">
    <interactant intactId="EBI-6407357">
        <id>P13128</id>
    </interactant>
    <interactant intactId="EBI-6407357">
        <id>P13128</id>
        <label>hly</label>
    </interactant>
    <organismsDiffer>false</organismsDiffer>
    <experiments>4</experiments>
</comment>
<comment type="subcellular location">
    <subcellularLocation>
        <location evidence="15 16">Secreted</location>
    </subcellularLocation>
    <subcellularLocation>
        <location evidence="15 16">Host membrane</location>
        <topology evidence="16">Multi-pass membrane protein</topology>
    </subcellularLocation>
    <subcellularLocation>
        <location evidence="16">Host cell membrane</location>
        <topology evidence="16">Multi-pass membrane protein</topology>
    </subcellularLocation>
    <text evidence="24">Secreted as soluble protein that then inserts into the host membrane and forms pores formed by transmembrane beta-strands.</text>
</comment>
<comment type="domain">
    <text evidence="5 8 9">The N-terminal region is not required for secretion and hemolytic activity, but is involved in phagosomal escape of bacteria in infected cells and is critical for bacterial virulence. This region contains a PEST-like sequence, which does not mediate proteasomal degradation, but controls listeriolysin O production in the cytosol.</text>
</comment>
<comment type="PTM">
    <text evidence="9">Phosphorylated. Phosphorylation does not appear to be required for ubiquitination or degradation.</text>
</comment>
<comment type="PTM">
    <text evidence="9">Ubiquitinated.</text>
</comment>
<comment type="disruption phenotype">
    <text evidence="14">Cells lacking this gene have severely reduced cytokine production in the mouse Listeria-infected liver cells compared to wild-type.</text>
</comment>
<comment type="similarity">
    <text evidence="22">Belongs to the cholesterol-dependent cytolysin family.</text>
</comment>
<comment type="sequence caution" evidence="22">
    <conflict type="erroneous initiation">
        <sequence resource="EMBL-CDS" id="AAA69528"/>
    </conflict>
    <text>Extended N-terminus.</text>
</comment>
<comment type="sequence caution" evidence="22">
    <conflict type="erroneous initiation">
        <sequence resource="EMBL-CDS" id="AAA69531"/>
    </conflict>
    <text>Extended N-terminus.</text>
</comment>
<reference key="1">
    <citation type="journal article" date="1989" name="Nucleic Acids Res.">
        <title>Nucleotide sequence of the listeriolysin gene from a Listeria monocytogenes serotype 1/2a strain.</title>
        <authorList>
            <person name="Domann E."/>
            <person name="Chakraborty T."/>
        </authorList>
    </citation>
    <scope>NUCLEOTIDE SEQUENCE [GENOMIC DNA]</scope>
    <source>
        <strain>EGD / Serovar 1/2a</strain>
    </source>
</reference>
<reference key="2">
    <citation type="journal article" date="1988" name="Infect. Immun.">
        <title>Expression in Escherichia coli and sequence analysis of the listeriolysin O determinant of Listeria monocytogenes.</title>
        <authorList>
            <person name="Mengaud J."/>
            <person name="Vicente M.-F."/>
            <person name="Chenevert J."/>
            <person name="Pereira J.M."/>
            <person name="Geoffroy C."/>
            <person name="Gicquel-Sanzey B."/>
            <person name="Baquero F."/>
            <person name="Perez-Diaz J.-C."/>
            <person name="Cossart P."/>
        </authorList>
    </citation>
    <scope>NUCLEOTIDE SEQUENCE [GENOMIC DNA]</scope>
</reference>
<reference key="3">
    <citation type="journal article" date="1991" name="Infect. Immun.">
        <title>Listeria monocytogenes isolates can be classified into two major types according to the sequence of the listeriolysin gene.</title>
        <authorList>
            <person name="Rasmussen O.F."/>
            <person name="Beck T."/>
            <person name="Olsen J.E."/>
            <person name="Dons L."/>
            <person name="Rossen L."/>
        </authorList>
    </citation>
    <scope>NUCLEOTIDE SEQUENCE [GENOMIC DNA]</scope>
    <source>
        <strain>12067</strain>
    </source>
</reference>
<reference key="4">
    <citation type="journal article" date="1998" name="Curr. Microbiol.">
        <title>Identification and characterization of nucleotide sequence differences in three virulence-associated genes of Listeria monocytogenes strains representing clinically important serotypes.</title>
        <authorList>
            <person name="Vines A."/>
            <person name="Swaminathan B."/>
        </authorList>
    </citation>
    <scope>NUCLEOTIDE SEQUENCE [GENOMIC DNA]</scope>
    <source>
        <strain>F4233 / Serotype 1/2b</strain>
        <strain>F5782 / Serotype 4b</strain>
        <strain>F6789 / Serotype 1/2b</strain>
    </source>
</reference>
<reference key="5">
    <citation type="journal article" date="2001" name="Science">
        <title>Comparative genomics of Listeria species.</title>
        <authorList>
            <person name="Glaser P."/>
            <person name="Frangeul L."/>
            <person name="Buchrieser C."/>
            <person name="Rusniok C."/>
            <person name="Amend A."/>
            <person name="Baquero F."/>
            <person name="Berche P."/>
            <person name="Bloecker H."/>
            <person name="Brandt P."/>
            <person name="Chakraborty T."/>
            <person name="Charbit A."/>
            <person name="Chetouani F."/>
            <person name="Couve E."/>
            <person name="de Daruvar A."/>
            <person name="Dehoux P."/>
            <person name="Domann E."/>
            <person name="Dominguez-Bernal G."/>
            <person name="Duchaud E."/>
            <person name="Durant L."/>
            <person name="Dussurget O."/>
            <person name="Entian K.-D."/>
            <person name="Fsihi H."/>
            <person name="Garcia-del Portillo F."/>
            <person name="Garrido P."/>
            <person name="Gautier L."/>
            <person name="Goebel W."/>
            <person name="Gomez-Lopez N."/>
            <person name="Hain T."/>
            <person name="Hauf J."/>
            <person name="Jackson D."/>
            <person name="Jones L.-M."/>
            <person name="Kaerst U."/>
            <person name="Kreft J."/>
            <person name="Kuhn M."/>
            <person name="Kunst F."/>
            <person name="Kurapkat G."/>
            <person name="Madueno E."/>
            <person name="Maitournam A."/>
            <person name="Mata Vicente J."/>
            <person name="Ng E."/>
            <person name="Nedjari H."/>
            <person name="Nordsiek G."/>
            <person name="Novella S."/>
            <person name="de Pablos B."/>
            <person name="Perez-Diaz J.-C."/>
            <person name="Purcell R."/>
            <person name="Remmel B."/>
            <person name="Rose M."/>
            <person name="Schlueter T."/>
            <person name="Simoes N."/>
            <person name="Tierrez A."/>
            <person name="Vazquez-Boland J.-A."/>
            <person name="Voss H."/>
            <person name="Wehland J."/>
            <person name="Cossart P."/>
        </authorList>
    </citation>
    <scope>NUCLEOTIDE SEQUENCE [LARGE SCALE GENOMIC DNA]</scope>
    <source>
        <strain>ATCC BAA-679 / EGD-e</strain>
    </source>
</reference>
<reference key="6">
    <citation type="journal article" date="1987" name="Infect. Immun.">
        <title>Identification of the structural gene encoding the SH-activated hemolysin of Listeria monocytogenes: listeriolysin O is homologous to streptolysin O and pneumolysin.</title>
        <authorList>
            <person name="Mengaud J."/>
            <person name="Chenevert J."/>
            <person name="Geoffroy C."/>
            <person name="Gaillard J.-L."/>
            <person name="Cossart P."/>
        </authorList>
    </citation>
    <scope>NUCLEOTIDE SEQUENCE [GENOMIC DNA] OF 413-480</scope>
</reference>
<reference key="7">
    <citation type="journal article" date="1987" name="Infect. Immun.">
        <title>Purification, characterization, and toxicity of the sulfhydryl-activated hemolysin listeriolysin O from Listeria monocytogenes.</title>
        <authorList>
            <person name="Geoffroy C."/>
            <person name="Gaillard J.L."/>
            <person name="Alouf J.E."/>
            <person name="Berche P."/>
        </authorList>
    </citation>
    <scope>FUNCTION</scope>
    <scope>ACTIVITY REGULATION</scope>
    <scope>BIOPHYSICOCHEMICAL PROPERTIES</scope>
    <scope>SUBCELLULAR LOCATION</scope>
    <source>
        <strain>EGD / Serovar 1/2a</strain>
    </source>
</reference>
<reference key="8">
    <citation type="journal article" date="1990" name="Mol. Microbiol.">
        <title>Attenuated mutants of the intracellular bacterium Listeria monocytogenes obtained by single amino acid substitutions in listeriolysin O.</title>
        <authorList>
            <person name="Michel E."/>
            <person name="Reich K.A."/>
            <person name="Favier R."/>
            <person name="Berche P."/>
            <person name="Cossart P."/>
        </authorList>
    </citation>
    <scope>MUTAGENESIS OF CYS-484; TRP-491 AND TRP-492</scope>
</reference>
<reference key="9">
    <citation type="journal article" date="1996" name="Infect. Immun.">
        <title>Listeriolysin O activates mitogen-activated protein kinase in eucaryotic cells.</title>
        <authorList>
            <person name="Tang P."/>
            <person name="Rosenshine I."/>
            <person name="Cossart P."/>
            <person name="Finlay B.B."/>
        </authorList>
    </citation>
    <scope>FUNCTION</scope>
    <scope>MUTAGENESIS OF CYS-484; TRP-491 AND TRP-492</scope>
    <source>
        <strain>SLCC 5764 / Serovar 1/2a</strain>
    </source>
</reference>
<reference key="10">
    <citation type="journal article" date="1997" name="Infect. Immun.">
        <title>Listeriolysin and IrpA are major protein targets of the human humoral response against Listeria monocytogenes.</title>
        <authorList>
            <person name="Grenningloh R."/>
            <person name="Darji A."/>
            <person name="Wehland J."/>
            <person name="Chakraborty T."/>
            <person name="Weiss S."/>
        </authorList>
    </citation>
    <scope>ANTIGENICITY</scope>
</reference>
<reference key="11">
    <citation type="journal article" date="1997" name="J. Exp. Med.">
        <title>pH-dependent perforation of macrophage phagosomes by listeriolysin O from Listeria monocytogenes.</title>
        <authorList>
            <person name="Beauregard K.E."/>
            <person name="Lee K.D."/>
            <person name="Collier R.J."/>
            <person name="Swanson J.A."/>
        </authorList>
    </citation>
    <scope>ACTIVITY REGULATION</scope>
</reference>
<reference key="12">
    <citation type="journal article" date="2001" name="FEMS Microbiol. Lett.">
        <title>Difference in cholesterol-binding and cytolytic activities between listeriolysin O and seeligeriolysin O: a possible role of alanine residue in tryptophan-rich undecapeptide.</title>
        <authorList>
            <person name="Ito Y."/>
            <person name="Kawamura I."/>
            <person name="Kohda C."/>
            <person name="Baba H."/>
            <person name="Kimoto T."/>
            <person name="Watanabe I."/>
            <person name="Nomura T."/>
            <person name="Mitsuyama M."/>
        </authorList>
    </citation>
    <scope>FUNCTION</scope>
    <scope>MUTAGENESIS OF ALA-488</scope>
    <source>
        <strain>EGD</strain>
    </source>
</reference>
<reference key="13">
    <citation type="journal article" date="2001" name="Mol. Microbiol.">
        <title>Identification of a PEST-like motif in listeriolysin O required for phagosomal escape and for virulence in Listeria monocytogenes.</title>
        <authorList>
            <person name="Lety M.A."/>
            <person name="Frehel C."/>
            <person name="Dubail I."/>
            <person name="Beretti J.L."/>
            <person name="Kayal S."/>
            <person name="Berche P."/>
            <person name="Charbit A."/>
        </authorList>
    </citation>
    <scope>DOMAIN</scope>
    <source>
        <strain>EGD / Serovar 1/2a</strain>
    </source>
</reference>
<reference key="14">
    <citation type="journal article" date="2002" name="J. Cell Biol.">
        <title>The Listeria monocytogenes hemolysin has an acidic pH optimum to compartmentalize activity and prevent damage to infected host cells.</title>
        <authorList>
            <person name="Glomski I.J."/>
            <person name="Gedde M.M."/>
            <person name="Tsang A.W."/>
            <person name="Swanson J.A."/>
            <person name="Portnoy D.A."/>
        </authorList>
    </citation>
    <scope>FUNCTION</scope>
    <scope>REGULATION BY PH</scope>
    <scope>MUTAGENESIS OF LEU-461</scope>
    <source>
        <strain>10403S / Serovar 1/2a</strain>
    </source>
</reference>
<reference key="15">
    <citation type="journal article" date="2002" name="Mol. Microbiol.">
        <title>Critical role of the N-terminal residues of listeriolysin O in phagosomal escape and virulence of Listeria monocytogenes.</title>
        <authorList>
            <person name="Lety M.A."/>
            <person name="Frehel C."/>
            <person name="Berche P."/>
            <person name="Charbit A."/>
        </authorList>
    </citation>
    <scope>DOMAIN</scope>
    <scope>MUTAGENESIS OF PRO-49; LYS-50 AND PRO-52</scope>
    <source>
        <strain>EGD / Serovar 1/2a</strain>
    </source>
</reference>
<reference key="16">
    <citation type="journal article" date="2006" name="Cell. Microbiol.">
        <title>Phosphorylation, ubiquitination and degradation of listeriolysin O in mammalian cells: role of the PEST-like sequence.</title>
        <authorList>
            <person name="Schnupf P."/>
            <person name="Portnoy D.A."/>
            <person name="Decatur A.L."/>
        </authorList>
    </citation>
    <scope>PHOSPHORYLATION AT SER-44</scope>
    <scope>UBIQUITINATION</scope>
    <scope>DOMAIN</scope>
    <scope>ACTIVITY REGULATION</scope>
    <scope>MUTAGENESIS OF SER-44</scope>
    <source>
        <strain>10403S / Serovar 1/2a</strain>
    </source>
</reference>
<reference key="17">
    <citation type="journal article" date="2006" name="Mol. Microbiol.">
        <title>Regulated translation of listeriolysin O controls virulence of Listeria monocytogenes.</title>
        <authorList>
            <person name="Schnupf P."/>
            <person name="Hofmann J."/>
            <person name="Norseen J."/>
            <person name="Glomski I.J."/>
            <person name="Schwartzstein H."/>
            <person name="Decatur A.L."/>
        </authorList>
    </citation>
    <scope>ACTIVITY REGULATION</scope>
    <source>
        <strain>10403S / Serovar 1/2a</strain>
    </source>
</reference>
<reference key="18">
    <citation type="journal article" date="2007" name="Microbes Infect.">
        <title>Listeriolysin O: a phagosome-specific lysin.</title>
        <authorList>
            <person name="Schnupf P."/>
            <person name="Portnoy D.A."/>
        </authorList>
    </citation>
    <scope>REVIEW</scope>
</reference>
<reference key="19">
    <citation type="journal article" date="2008" name="Nature">
        <title>Listeriolysin O allows Listeria monocytogenes replication in macrophage vacuoles.</title>
        <authorList>
            <person name="Birmingham C.L."/>
            <person name="Canadien V."/>
            <person name="Kaniuk N.A."/>
            <person name="Steinberg B.E."/>
            <person name="Higgins D.E."/>
            <person name="Brumell J.H."/>
        </authorList>
    </citation>
    <scope>FUNCTION IN SLAPS FORMATION</scope>
    <source>
        <strain>10403S / Serovar 1/2a</strain>
    </source>
</reference>
<reference key="20">
    <citation type="journal article" date="2010" name="Nature">
        <title>Listeria monocytogenes impairs SUMOylation for efficient infection.</title>
        <authorList>
            <person name="Ribet D."/>
            <person name="Hamon M."/>
            <person name="Gouin E."/>
            <person name="Nahori M.A."/>
            <person name="Impens F."/>
            <person name="Neyret-Kahn H."/>
            <person name="Gevaert K."/>
            <person name="Vandekerckhove J."/>
            <person name="Dejean A."/>
            <person name="Cossart P."/>
        </authorList>
    </citation>
    <scope>FUNCTION</scope>
    <source>
        <strain>EGD / Serovar 1/2a</strain>
    </source>
</reference>
<reference key="21">
    <citation type="journal article" date="2011" name="J. Infect. Dis.">
        <title>OatA, a peptidoglycan O-acetyltransferase involved in Listeria monocytogenes immune escape, is critical for virulence.</title>
        <authorList>
            <person name="Aubry C."/>
            <person name="Goulard C."/>
            <person name="Nahori M.A."/>
            <person name="Cayet N."/>
            <person name="Decalf J."/>
            <person name="Sachse M."/>
            <person name="Boneca I.G."/>
            <person name="Cossart P."/>
            <person name="Dussurget O."/>
        </authorList>
    </citation>
    <scope>DISRUPTION PHENOTYPE</scope>
    <source>
        <strain evidence="20">ATCC BAA-679 / EGD-e</strain>
    </source>
</reference>
<reference evidence="25" key="22">
    <citation type="journal article" date="2014" name="Nat. Commun.">
        <title>Crystal structure of listeriolysin O reveals molecular details of oligomerization and pore formation.</title>
        <authorList>
            <person name="Koester S."/>
            <person name="van Pee K."/>
            <person name="Hudel M."/>
            <person name="Leustik M."/>
            <person name="Rhinow D."/>
            <person name="Kuehlbrandt W."/>
            <person name="Chakraborty T."/>
            <person name="Yildiz O."/>
        </authorList>
    </citation>
    <scope>X-RAY CRYSTALLOGRAPHY (2.15 ANGSTROMS) OF 39-526</scope>
    <scope>FUNCTION</scope>
    <scope>PROBABLE OLIGOMERIZATION</scope>
    <scope>SUBCELLULAR LOCATION</scope>
    <scope>MUTAGENESIS OF 38-SER--PRO-52; ALA-40; SER-44; LYS-175; SER-176; ASN-230; GLU-262 AND ASP-394</scope>
</reference>
<keyword id="KW-0002">3D-structure</keyword>
<keyword id="KW-0204">Cytolysis</keyword>
<keyword id="KW-0354">Hemolysis</keyword>
<keyword id="KW-1032">Host cell membrane</keyword>
<keyword id="KW-1043">Host membrane</keyword>
<keyword id="KW-0446">Lipid-binding</keyword>
<keyword id="KW-0472">Membrane</keyword>
<keyword id="KW-0597">Phosphoprotein</keyword>
<keyword id="KW-1185">Reference proteome</keyword>
<keyword id="KW-0964">Secreted</keyword>
<keyword id="KW-0732">Signal</keyword>
<keyword id="KW-0800">Toxin</keyword>
<keyword id="KW-0812">Transmembrane</keyword>
<keyword id="KW-1134">Transmembrane beta strand</keyword>
<keyword id="KW-0832">Ubl conjugation</keyword>
<keyword id="KW-0843">Virulence</keyword>
<organism>
    <name type="scientific">Listeria monocytogenes serovar 1/2a (strain ATCC BAA-679 / EGD-e)</name>
    <dbReference type="NCBI Taxonomy" id="169963"/>
    <lineage>
        <taxon>Bacteria</taxon>
        <taxon>Bacillati</taxon>
        <taxon>Bacillota</taxon>
        <taxon>Bacilli</taxon>
        <taxon>Bacillales</taxon>
        <taxon>Listeriaceae</taxon>
        <taxon>Listeria</taxon>
    </lineage>
</organism>
<gene>
    <name type="primary">hly</name>
    <name type="synonym">hlyA</name>
    <name type="synonym">lisA</name>
    <name type="ordered locus">lmo0202</name>
</gene>
<protein>
    <recommendedName>
        <fullName evidence="21">Listeriolysin O</fullName>
    </recommendedName>
    <alternativeName>
        <fullName>LLO</fullName>
    </alternativeName>
    <alternativeName>
        <fullName>Thiol-activated cytolysin</fullName>
    </alternativeName>
</protein>